<protein>
    <recommendedName>
        <fullName>3-isopropylmalate dehydratase small subunit 2</fullName>
        <ecNumber>4.2.1.33</ecNumber>
    </recommendedName>
    <alternativeName>
        <fullName>Alpha-IPM isomerase 2</fullName>
        <shortName>IPMI 2</shortName>
    </alternativeName>
    <alternativeName>
        <fullName>Isopropylmalate isomerase 2</fullName>
    </alternativeName>
</protein>
<gene>
    <name type="primary">leuD2</name>
    <name type="synonym">leuD_2</name>
    <name type="ordered locus">MK1206</name>
</gene>
<proteinExistence type="inferred from homology"/>
<feature type="chain" id="PRO_0000141939" description="3-isopropylmalate dehydratase small subunit 2">
    <location>
        <begin position="1"/>
        <end position="168"/>
    </location>
</feature>
<name>LEUD2_METKA</name>
<accession>Q8TW31</accession>
<organism>
    <name type="scientific">Methanopyrus kandleri (strain AV19 / DSM 6324 / JCM 9639 / NBRC 100938)</name>
    <dbReference type="NCBI Taxonomy" id="190192"/>
    <lineage>
        <taxon>Archaea</taxon>
        <taxon>Methanobacteriati</taxon>
        <taxon>Methanobacteriota</taxon>
        <taxon>Methanomada group</taxon>
        <taxon>Methanopyri</taxon>
        <taxon>Methanopyrales</taxon>
        <taxon>Methanopyraceae</taxon>
        <taxon>Methanopyrus</taxon>
    </lineage>
</organism>
<keyword id="KW-0028">Amino-acid biosynthesis</keyword>
<keyword id="KW-0100">Branched-chain amino acid biosynthesis</keyword>
<keyword id="KW-0432">Leucine biosynthesis</keyword>
<keyword id="KW-0456">Lyase</keyword>
<keyword id="KW-1185">Reference proteome</keyword>
<sequence length="168" mass="18714">MRWSGRAHVFGDDVDTDQIIPGRCLRRVSYDELGRYAMTGADPEFPEKVREGDVIVAGKNFGCGSSREQAVMALQQAGVACVVARSFARIFYRNAINRGLPTVEAEEDPTEVVEDGNRVTVDLDELVLRAGSEEVPLREPPEFALQAWREGGLLELVKKNPDKPPWRD</sequence>
<dbReference type="EC" id="4.2.1.33"/>
<dbReference type="EMBL" id="AE009439">
    <property type="protein sequence ID" value="AAM02419.1"/>
    <property type="molecule type" value="Genomic_DNA"/>
</dbReference>
<dbReference type="RefSeq" id="WP_011019574.1">
    <property type="nucleotide sequence ID" value="NC_003551.1"/>
</dbReference>
<dbReference type="SMR" id="Q8TW31"/>
<dbReference type="STRING" id="190192.MK1206"/>
<dbReference type="PaxDb" id="190192-MK1206"/>
<dbReference type="EnsemblBacteria" id="AAM02419">
    <property type="protein sequence ID" value="AAM02419"/>
    <property type="gene ID" value="MK1206"/>
</dbReference>
<dbReference type="GeneID" id="1477801"/>
<dbReference type="KEGG" id="mka:MK1206"/>
<dbReference type="PATRIC" id="fig|190192.8.peg.1308"/>
<dbReference type="HOGENOM" id="CLU_081378_1_1_2"/>
<dbReference type="InParanoid" id="Q8TW31"/>
<dbReference type="OrthoDB" id="6505at2157"/>
<dbReference type="UniPathway" id="UPA00048">
    <property type="reaction ID" value="UER00071"/>
</dbReference>
<dbReference type="Proteomes" id="UP000001826">
    <property type="component" value="Chromosome"/>
</dbReference>
<dbReference type="GO" id="GO:0003861">
    <property type="term" value="F:3-isopropylmalate dehydratase activity"/>
    <property type="evidence" value="ECO:0007669"/>
    <property type="project" value="UniProtKB-UniRule"/>
</dbReference>
<dbReference type="GO" id="GO:0009098">
    <property type="term" value="P:L-leucine biosynthetic process"/>
    <property type="evidence" value="ECO:0007669"/>
    <property type="project" value="UniProtKB-UniRule"/>
</dbReference>
<dbReference type="CDD" id="cd01577">
    <property type="entry name" value="IPMI_Swivel"/>
    <property type="match status" value="1"/>
</dbReference>
<dbReference type="Gene3D" id="3.20.19.10">
    <property type="entry name" value="Aconitase, domain 4"/>
    <property type="match status" value="1"/>
</dbReference>
<dbReference type="HAMAP" id="MF_01032">
    <property type="entry name" value="LeuD_type2"/>
    <property type="match status" value="1"/>
</dbReference>
<dbReference type="InterPro" id="IPR015928">
    <property type="entry name" value="Aconitase/3IPM_dehydase_swvl"/>
</dbReference>
<dbReference type="InterPro" id="IPR000573">
    <property type="entry name" value="AconitaseA/IPMdHydase_ssu_swvl"/>
</dbReference>
<dbReference type="InterPro" id="IPR033940">
    <property type="entry name" value="IPMI_Swivel"/>
</dbReference>
<dbReference type="InterPro" id="IPR050075">
    <property type="entry name" value="LeuD"/>
</dbReference>
<dbReference type="InterPro" id="IPR011827">
    <property type="entry name" value="LeuD_type2/HacB/DmdB"/>
</dbReference>
<dbReference type="NCBIfam" id="TIGR02087">
    <property type="entry name" value="LEUD_arch"/>
    <property type="match status" value="1"/>
</dbReference>
<dbReference type="PANTHER" id="PTHR43345:SF2">
    <property type="entry name" value="3-ISOPROPYLMALATE DEHYDRATASE SMALL SUBUNIT 1"/>
    <property type="match status" value="1"/>
</dbReference>
<dbReference type="PANTHER" id="PTHR43345">
    <property type="entry name" value="3-ISOPROPYLMALATE DEHYDRATASE SMALL SUBUNIT 2-RELATED-RELATED"/>
    <property type="match status" value="1"/>
</dbReference>
<dbReference type="Pfam" id="PF00694">
    <property type="entry name" value="Aconitase_C"/>
    <property type="match status" value="1"/>
</dbReference>
<dbReference type="SUPFAM" id="SSF52016">
    <property type="entry name" value="LeuD/IlvD-like"/>
    <property type="match status" value="1"/>
</dbReference>
<evidence type="ECO:0000250" key="1"/>
<evidence type="ECO:0000305" key="2"/>
<reference key="1">
    <citation type="journal article" date="2002" name="Proc. Natl. Acad. Sci. U.S.A.">
        <title>The complete genome of hyperthermophile Methanopyrus kandleri AV19 and monophyly of archaeal methanogens.</title>
        <authorList>
            <person name="Slesarev A.I."/>
            <person name="Mezhevaya K.V."/>
            <person name="Makarova K.S."/>
            <person name="Polushin N.N."/>
            <person name="Shcherbinina O.V."/>
            <person name="Shakhova V.V."/>
            <person name="Belova G.I."/>
            <person name="Aravind L."/>
            <person name="Natale D.A."/>
            <person name="Rogozin I.B."/>
            <person name="Tatusov R.L."/>
            <person name="Wolf Y.I."/>
            <person name="Stetter K.O."/>
            <person name="Malykh A.G."/>
            <person name="Koonin E.V."/>
            <person name="Kozyavkin S.A."/>
        </authorList>
    </citation>
    <scope>NUCLEOTIDE SEQUENCE [LARGE SCALE GENOMIC DNA]</scope>
    <source>
        <strain>AV19 / DSM 6324 / JCM 9639 / NBRC 100938</strain>
    </source>
</reference>
<comment type="function">
    <text evidence="1">Catalyzes the isomerization between 2-isopropylmalate and 3-isopropylmalate, via the formation of 2-isopropylmaleate.</text>
</comment>
<comment type="catalytic activity">
    <reaction>
        <text>(2R,3S)-3-isopropylmalate = (2S)-2-isopropylmalate</text>
        <dbReference type="Rhea" id="RHEA:32287"/>
        <dbReference type="ChEBI" id="CHEBI:1178"/>
        <dbReference type="ChEBI" id="CHEBI:35121"/>
        <dbReference type="EC" id="4.2.1.33"/>
    </reaction>
</comment>
<comment type="pathway">
    <text>Amino-acid biosynthesis; L-leucine biosynthesis; L-leucine from 3-methyl-2-oxobutanoate: step 2/4.</text>
</comment>
<comment type="subunit">
    <text evidence="1">Heterodimer of LeuC and LeuD.</text>
</comment>
<comment type="similarity">
    <text evidence="2">Belongs to the LeuD family. LeuD type 2 subfamily.</text>
</comment>